<keyword id="KW-0030">Aminoacyl-tRNA synthetase</keyword>
<keyword id="KW-0067">ATP-binding</keyword>
<keyword id="KW-0963">Cytoplasm</keyword>
<keyword id="KW-0436">Ligase</keyword>
<keyword id="KW-0547">Nucleotide-binding</keyword>
<keyword id="KW-0648">Protein biosynthesis</keyword>
<organism>
    <name type="scientific">Borrelia recurrentis (strain A1)</name>
    <dbReference type="NCBI Taxonomy" id="412418"/>
    <lineage>
        <taxon>Bacteria</taxon>
        <taxon>Pseudomonadati</taxon>
        <taxon>Spirochaetota</taxon>
        <taxon>Spirochaetia</taxon>
        <taxon>Spirochaetales</taxon>
        <taxon>Borreliaceae</taxon>
        <taxon>Borrelia</taxon>
    </lineage>
</organism>
<protein>
    <recommendedName>
        <fullName evidence="1">Leucine--tRNA ligase</fullName>
        <ecNumber evidence="1">6.1.1.4</ecNumber>
    </recommendedName>
    <alternativeName>
        <fullName evidence="1">Leucyl-tRNA synthetase</fullName>
        <shortName evidence="1">LeuRS</shortName>
    </alternativeName>
</protein>
<dbReference type="EC" id="6.1.1.4" evidence="1"/>
<dbReference type="EMBL" id="CP000993">
    <property type="protein sequence ID" value="ACH94501.1"/>
    <property type="molecule type" value="Genomic_DNA"/>
</dbReference>
<dbReference type="RefSeq" id="WP_012538770.1">
    <property type="nucleotide sequence ID" value="NC_011244.1"/>
</dbReference>
<dbReference type="SMR" id="B5RR67"/>
<dbReference type="KEGG" id="bre:BRE_252"/>
<dbReference type="HOGENOM" id="CLU_004427_0_0_12"/>
<dbReference type="Proteomes" id="UP000000612">
    <property type="component" value="Chromosome"/>
</dbReference>
<dbReference type="GO" id="GO:0005829">
    <property type="term" value="C:cytosol"/>
    <property type="evidence" value="ECO:0007669"/>
    <property type="project" value="TreeGrafter"/>
</dbReference>
<dbReference type="GO" id="GO:0002161">
    <property type="term" value="F:aminoacyl-tRNA deacylase activity"/>
    <property type="evidence" value="ECO:0007669"/>
    <property type="project" value="InterPro"/>
</dbReference>
<dbReference type="GO" id="GO:0005524">
    <property type="term" value="F:ATP binding"/>
    <property type="evidence" value="ECO:0007669"/>
    <property type="project" value="UniProtKB-UniRule"/>
</dbReference>
<dbReference type="GO" id="GO:0004823">
    <property type="term" value="F:leucine-tRNA ligase activity"/>
    <property type="evidence" value="ECO:0007669"/>
    <property type="project" value="UniProtKB-UniRule"/>
</dbReference>
<dbReference type="GO" id="GO:0006429">
    <property type="term" value="P:leucyl-tRNA aminoacylation"/>
    <property type="evidence" value="ECO:0007669"/>
    <property type="project" value="UniProtKB-UniRule"/>
</dbReference>
<dbReference type="CDD" id="cd07958">
    <property type="entry name" value="Anticodon_Ia_Leu_BEm"/>
    <property type="match status" value="1"/>
</dbReference>
<dbReference type="CDD" id="cd00812">
    <property type="entry name" value="LeuRS_core"/>
    <property type="match status" value="1"/>
</dbReference>
<dbReference type="FunFam" id="1.10.730.10:FF:000002">
    <property type="entry name" value="Leucine--tRNA ligase"/>
    <property type="match status" value="1"/>
</dbReference>
<dbReference type="FunFam" id="3.40.50.620:FF:000056">
    <property type="entry name" value="Leucine--tRNA ligase"/>
    <property type="match status" value="1"/>
</dbReference>
<dbReference type="FunFam" id="3.40.50.620:FF:000077">
    <property type="entry name" value="Leucine--tRNA ligase"/>
    <property type="match status" value="1"/>
</dbReference>
<dbReference type="Gene3D" id="3.40.50.620">
    <property type="entry name" value="HUPs"/>
    <property type="match status" value="2"/>
</dbReference>
<dbReference type="Gene3D" id="1.10.730.10">
    <property type="entry name" value="Isoleucyl-tRNA Synthetase, Domain 1"/>
    <property type="match status" value="1"/>
</dbReference>
<dbReference type="HAMAP" id="MF_00049_B">
    <property type="entry name" value="Leu_tRNA_synth_B"/>
    <property type="match status" value="1"/>
</dbReference>
<dbReference type="InterPro" id="IPR001412">
    <property type="entry name" value="aa-tRNA-synth_I_CS"/>
</dbReference>
<dbReference type="InterPro" id="IPR002300">
    <property type="entry name" value="aa-tRNA-synth_Ia"/>
</dbReference>
<dbReference type="InterPro" id="IPR002302">
    <property type="entry name" value="Leu-tRNA-ligase"/>
</dbReference>
<dbReference type="InterPro" id="IPR025709">
    <property type="entry name" value="Leu_tRNA-synth_edit"/>
</dbReference>
<dbReference type="InterPro" id="IPR013155">
    <property type="entry name" value="M/V/L/I-tRNA-synth_anticd-bd"/>
</dbReference>
<dbReference type="InterPro" id="IPR015413">
    <property type="entry name" value="Methionyl/Leucyl_tRNA_Synth"/>
</dbReference>
<dbReference type="InterPro" id="IPR014729">
    <property type="entry name" value="Rossmann-like_a/b/a_fold"/>
</dbReference>
<dbReference type="InterPro" id="IPR009080">
    <property type="entry name" value="tRNAsynth_Ia_anticodon-bd"/>
</dbReference>
<dbReference type="InterPro" id="IPR009008">
    <property type="entry name" value="Val/Leu/Ile-tRNA-synth_edit"/>
</dbReference>
<dbReference type="NCBIfam" id="TIGR00396">
    <property type="entry name" value="leuS_bact"/>
    <property type="match status" value="1"/>
</dbReference>
<dbReference type="PANTHER" id="PTHR43740:SF2">
    <property type="entry name" value="LEUCINE--TRNA LIGASE, MITOCHONDRIAL"/>
    <property type="match status" value="1"/>
</dbReference>
<dbReference type="PANTHER" id="PTHR43740">
    <property type="entry name" value="LEUCYL-TRNA SYNTHETASE"/>
    <property type="match status" value="1"/>
</dbReference>
<dbReference type="Pfam" id="PF08264">
    <property type="entry name" value="Anticodon_1"/>
    <property type="match status" value="1"/>
</dbReference>
<dbReference type="Pfam" id="PF00133">
    <property type="entry name" value="tRNA-synt_1"/>
    <property type="match status" value="2"/>
</dbReference>
<dbReference type="Pfam" id="PF13603">
    <property type="entry name" value="tRNA-synt_1_2"/>
    <property type="match status" value="1"/>
</dbReference>
<dbReference type="Pfam" id="PF09334">
    <property type="entry name" value="tRNA-synt_1g"/>
    <property type="match status" value="1"/>
</dbReference>
<dbReference type="PRINTS" id="PR00985">
    <property type="entry name" value="TRNASYNTHLEU"/>
</dbReference>
<dbReference type="SUPFAM" id="SSF47323">
    <property type="entry name" value="Anticodon-binding domain of a subclass of class I aminoacyl-tRNA synthetases"/>
    <property type="match status" value="1"/>
</dbReference>
<dbReference type="SUPFAM" id="SSF52374">
    <property type="entry name" value="Nucleotidylyl transferase"/>
    <property type="match status" value="1"/>
</dbReference>
<dbReference type="SUPFAM" id="SSF50677">
    <property type="entry name" value="ValRS/IleRS/LeuRS editing domain"/>
    <property type="match status" value="1"/>
</dbReference>
<dbReference type="PROSITE" id="PS00178">
    <property type="entry name" value="AA_TRNA_LIGASE_I"/>
    <property type="match status" value="1"/>
</dbReference>
<proteinExistence type="inferred from homology"/>
<reference key="1">
    <citation type="journal article" date="2008" name="PLoS Genet.">
        <title>The genome of Borrelia recurrentis, the agent of deadly louse-borne relapsing fever, is a degraded subset of tick-borne Borrelia duttonii.</title>
        <authorList>
            <person name="Lescot M."/>
            <person name="Audic S."/>
            <person name="Robert C."/>
            <person name="Nguyen T.T."/>
            <person name="Blanc G."/>
            <person name="Cutler S.J."/>
            <person name="Wincker P."/>
            <person name="Couloux A."/>
            <person name="Claverie J.-M."/>
            <person name="Raoult D."/>
            <person name="Drancourt M."/>
        </authorList>
    </citation>
    <scope>NUCLEOTIDE SEQUENCE [LARGE SCALE GENOMIC DNA]</scope>
    <source>
        <strain>A1</strain>
    </source>
</reference>
<sequence>MSKYDFKKIEKKWQNYWDKHKTYKVNEDPNVPKEKRIYILDMFPYPSANGLHVGHPEGYTATDILTRYKLLNGFNVLHPMGFDSFGLPAENYAIQTGKHPKKITEKNIEKFKEQIKALGFAYDWDREIKTHDVNYYKWTQWIFLQLYKKGLAYTKEIPVWYCPDLGTVLANEEVIQTPDGPRSERGFHKVERKPLRQWLLKITKYAERLIRDLEEVDWPDSVKEMQKNWIGKSTGVEIEFLIKESKEKIKVFTTRPDTIFGVTYLVLAPEHPMVDKITKDELKPIISKYKDKEILKSDLERTSLEKDKTGIFTGAYAINPITKEEIPIWIGSYILGTYGTGAVMSVPAHDERDFEFAKKYNLPIKQVVSQTGTNEVLIKPFTENGISINTPTEFNNLKTIEVKTKVIKWLIENKMGQEKVNYKLRDWIFSRQRYWGEPIPILFDDNLNEIPLNDDELPLTLPDIENYKPSGTGESPLSKIKDWVNVKRNGKIYKRETNTMPQWAGSCWYYIRYLDPHNEKEFANKEKINYWMPVDLYIGGAEHSVLHLLYARFWHKVLYDLGYVNIKEPFRKLINQGMITSFAYQDENGILIPNDEVEKKDNKFFSKKNNKELKQIIAKMSKSLKNIINPDDIIKEYGADSMRIYEMFMGPLTDSKPWNTQGLIGIFRFLNKIWLIKNKELTNETPPKEIISELHKTIKKVTEDIETLNFNTAISTLMIFINELLKHEKNYLKIFRPISIILSPFAPHLGEELWEFMGEQSSIFKNAKWPKYDLNSIIDDTREIVLQVNGKTKDKIMIKKDTDEKTLKKIAFNNQKIIQNINNKQIIKIITVKDKLVNIVAK</sequence>
<evidence type="ECO:0000255" key="1">
    <source>
        <dbReference type="HAMAP-Rule" id="MF_00049"/>
    </source>
</evidence>
<accession>B5RR67</accession>
<feature type="chain" id="PRO_1000091294" description="Leucine--tRNA ligase">
    <location>
        <begin position="1"/>
        <end position="842"/>
    </location>
</feature>
<feature type="short sequence motif" description="'HIGH' region">
    <location>
        <begin position="44"/>
        <end position="55"/>
    </location>
</feature>
<feature type="short sequence motif" description="'KMSKS' region">
    <location>
        <begin position="619"/>
        <end position="623"/>
    </location>
</feature>
<feature type="binding site" evidence="1">
    <location>
        <position position="622"/>
    </location>
    <ligand>
        <name>ATP</name>
        <dbReference type="ChEBI" id="CHEBI:30616"/>
    </ligand>
</feature>
<gene>
    <name evidence="1" type="primary">leuS</name>
    <name type="ordered locus">BRE_252</name>
</gene>
<name>SYL_BORRA</name>
<comment type="catalytic activity">
    <reaction evidence="1">
        <text>tRNA(Leu) + L-leucine + ATP = L-leucyl-tRNA(Leu) + AMP + diphosphate</text>
        <dbReference type="Rhea" id="RHEA:11688"/>
        <dbReference type="Rhea" id="RHEA-COMP:9613"/>
        <dbReference type="Rhea" id="RHEA-COMP:9622"/>
        <dbReference type="ChEBI" id="CHEBI:30616"/>
        <dbReference type="ChEBI" id="CHEBI:33019"/>
        <dbReference type="ChEBI" id="CHEBI:57427"/>
        <dbReference type="ChEBI" id="CHEBI:78442"/>
        <dbReference type="ChEBI" id="CHEBI:78494"/>
        <dbReference type="ChEBI" id="CHEBI:456215"/>
        <dbReference type="EC" id="6.1.1.4"/>
    </reaction>
</comment>
<comment type="subcellular location">
    <subcellularLocation>
        <location evidence="1">Cytoplasm</location>
    </subcellularLocation>
</comment>
<comment type="similarity">
    <text evidence="1">Belongs to the class-I aminoacyl-tRNA synthetase family.</text>
</comment>